<evidence type="ECO:0000255" key="1">
    <source>
        <dbReference type="HAMAP-Rule" id="MF_00012"/>
    </source>
</evidence>
<comment type="function">
    <text evidence="1">Functions in the biosynthesis of branched-chain amino acids. Catalyzes the dehydration of (2R,3R)-2,3-dihydroxy-3-methylpentanoate (2,3-dihydroxy-3-methylvalerate) into 2-oxo-3-methylpentanoate (2-oxo-3-methylvalerate) and of (2R)-2,3-dihydroxy-3-methylbutanoate (2,3-dihydroxyisovalerate) into 2-oxo-3-methylbutanoate (2-oxoisovalerate), the penultimate precursor to L-isoleucine and L-valine, respectively.</text>
</comment>
<comment type="catalytic activity">
    <reaction evidence="1">
        <text>(2R)-2,3-dihydroxy-3-methylbutanoate = 3-methyl-2-oxobutanoate + H2O</text>
        <dbReference type="Rhea" id="RHEA:24809"/>
        <dbReference type="ChEBI" id="CHEBI:11851"/>
        <dbReference type="ChEBI" id="CHEBI:15377"/>
        <dbReference type="ChEBI" id="CHEBI:49072"/>
        <dbReference type="EC" id="4.2.1.9"/>
    </reaction>
    <physiologicalReaction direction="left-to-right" evidence="1">
        <dbReference type="Rhea" id="RHEA:24810"/>
    </physiologicalReaction>
</comment>
<comment type="catalytic activity">
    <reaction evidence="1">
        <text>(2R,3R)-2,3-dihydroxy-3-methylpentanoate = (S)-3-methyl-2-oxopentanoate + H2O</text>
        <dbReference type="Rhea" id="RHEA:27694"/>
        <dbReference type="ChEBI" id="CHEBI:15377"/>
        <dbReference type="ChEBI" id="CHEBI:35146"/>
        <dbReference type="ChEBI" id="CHEBI:49258"/>
        <dbReference type="EC" id="4.2.1.9"/>
    </reaction>
    <physiologicalReaction direction="left-to-right" evidence="1">
        <dbReference type="Rhea" id="RHEA:27695"/>
    </physiologicalReaction>
</comment>
<comment type="cofactor">
    <cofactor evidence="1">
        <name>[2Fe-2S] cluster</name>
        <dbReference type="ChEBI" id="CHEBI:190135"/>
    </cofactor>
    <text evidence="1">Binds 1 [2Fe-2S] cluster per subunit. This cluster acts as a Lewis acid cofactor.</text>
</comment>
<comment type="cofactor">
    <cofactor evidence="1">
        <name>Mg(2+)</name>
        <dbReference type="ChEBI" id="CHEBI:18420"/>
    </cofactor>
</comment>
<comment type="pathway">
    <text evidence="1">Amino-acid biosynthesis; L-isoleucine biosynthesis; L-isoleucine from 2-oxobutanoate: step 3/4.</text>
</comment>
<comment type="pathway">
    <text evidence="1">Amino-acid biosynthesis; L-valine biosynthesis; L-valine from pyruvate: step 3/4.</text>
</comment>
<comment type="subunit">
    <text evidence="1">Homodimer.</text>
</comment>
<comment type="similarity">
    <text evidence="1">Belongs to the IlvD/Edd family.</text>
</comment>
<reference key="1">
    <citation type="submission" date="2007-06" db="EMBL/GenBank/DDBJ databases">
        <title>Complete sequence of Methanococcus aeolicus Nankai-3.</title>
        <authorList>
            <consortium name="US DOE Joint Genome Institute"/>
            <person name="Copeland A."/>
            <person name="Lucas S."/>
            <person name="Lapidus A."/>
            <person name="Barry K."/>
            <person name="Glavina del Rio T."/>
            <person name="Dalin E."/>
            <person name="Tice H."/>
            <person name="Pitluck S."/>
            <person name="Chain P."/>
            <person name="Malfatti S."/>
            <person name="Shin M."/>
            <person name="Vergez L."/>
            <person name="Schmutz J."/>
            <person name="Larimer F."/>
            <person name="Land M."/>
            <person name="Hauser L."/>
            <person name="Kyrpides N."/>
            <person name="Lykidis A."/>
            <person name="Sieprawska-Lupa M."/>
            <person name="Whitman W.B."/>
            <person name="Richardson P."/>
        </authorList>
    </citation>
    <scope>NUCLEOTIDE SEQUENCE [LARGE SCALE GENOMIC DNA]</scope>
    <source>
        <strain>ATCC BAA-1280 / DSM 17508 / OCM 812 / Nankai-3</strain>
    </source>
</reference>
<sequence>MISDNLKKGVSRAPNRSLLKACGYTDEEIEKPFIGIVNSFTEVVPGHIHLNTLAEAAKKGVYANGGTPFEFNTMAVCDGIAMGHEGMRYSLPSREIIADTVESMAKAHGFDGLVLIPSCDKIVPGMIMGALRLNIPFIVITGGPMQPGELHGKKYDLISVFEGVGEYNVGKITKEELMEIETCACPGAGSCAGLFTANSMACLTETLGLSLPMCATTHATDAEKVRIAKRSGMKIVDLVKEDIKPTDLLTKESFENAILVDLALGGSSNTTLHIPALAYEIAPEFITLDDFDRLCDEVPHIASLRPGGDHFISDLHRAGGIPAVLKILEQKIRDANTVSGKSIKEIINEVKYIDYNIIRPVDKPVHETAGLRILKGNIAPDGCVVKISAVNPKMYKHEGPARVFNSEEETIDAILGGDIKEGDVVVIRYEGPAGGPGMREMLSPTSAICGMGLDDSVALITDGRFSGGSRGPCIGHISPEAMAGGPIAIIEEGDIIAIDMMAKEINLKISEEEIKERLANWKKPEIKVKKGYISRYAKLVSSANEGAVLK</sequence>
<gene>
    <name evidence="1" type="primary">ilvD</name>
    <name type="ordered locus">Maeo_0680</name>
</gene>
<accession>A6UUU2</accession>
<proteinExistence type="inferred from homology"/>
<dbReference type="EC" id="4.2.1.9" evidence="1"/>
<dbReference type="EMBL" id="CP000743">
    <property type="protein sequence ID" value="ABR56264.1"/>
    <property type="molecule type" value="Genomic_DNA"/>
</dbReference>
<dbReference type="RefSeq" id="WP_011973396.1">
    <property type="nucleotide sequence ID" value="NC_009635.1"/>
</dbReference>
<dbReference type="SMR" id="A6UUU2"/>
<dbReference type="STRING" id="419665.Maeo_0680"/>
<dbReference type="GeneID" id="5327023"/>
<dbReference type="KEGG" id="mae:Maeo_0680"/>
<dbReference type="eggNOG" id="arCOG04045">
    <property type="taxonomic scope" value="Archaea"/>
</dbReference>
<dbReference type="HOGENOM" id="CLU_014271_4_2_2"/>
<dbReference type="OrthoDB" id="8674at2157"/>
<dbReference type="UniPathway" id="UPA00047">
    <property type="reaction ID" value="UER00057"/>
</dbReference>
<dbReference type="UniPathway" id="UPA00049">
    <property type="reaction ID" value="UER00061"/>
</dbReference>
<dbReference type="Proteomes" id="UP000001106">
    <property type="component" value="Chromosome"/>
</dbReference>
<dbReference type="GO" id="GO:0005829">
    <property type="term" value="C:cytosol"/>
    <property type="evidence" value="ECO:0007669"/>
    <property type="project" value="TreeGrafter"/>
</dbReference>
<dbReference type="GO" id="GO:0051537">
    <property type="term" value="F:2 iron, 2 sulfur cluster binding"/>
    <property type="evidence" value="ECO:0007669"/>
    <property type="project" value="UniProtKB-UniRule"/>
</dbReference>
<dbReference type="GO" id="GO:0004160">
    <property type="term" value="F:dihydroxy-acid dehydratase activity"/>
    <property type="evidence" value="ECO:0007669"/>
    <property type="project" value="UniProtKB-UniRule"/>
</dbReference>
<dbReference type="GO" id="GO:0000287">
    <property type="term" value="F:magnesium ion binding"/>
    <property type="evidence" value="ECO:0007669"/>
    <property type="project" value="UniProtKB-UniRule"/>
</dbReference>
<dbReference type="GO" id="GO:0009097">
    <property type="term" value="P:isoleucine biosynthetic process"/>
    <property type="evidence" value="ECO:0007669"/>
    <property type="project" value="UniProtKB-UniRule"/>
</dbReference>
<dbReference type="GO" id="GO:0009099">
    <property type="term" value="P:L-valine biosynthetic process"/>
    <property type="evidence" value="ECO:0007669"/>
    <property type="project" value="UniProtKB-UniRule"/>
</dbReference>
<dbReference type="FunFam" id="3.50.30.80:FF:000001">
    <property type="entry name" value="Dihydroxy-acid dehydratase"/>
    <property type="match status" value="1"/>
</dbReference>
<dbReference type="Gene3D" id="3.50.30.80">
    <property type="entry name" value="IlvD/EDD C-terminal domain-like"/>
    <property type="match status" value="1"/>
</dbReference>
<dbReference type="HAMAP" id="MF_00012">
    <property type="entry name" value="IlvD"/>
    <property type="match status" value="1"/>
</dbReference>
<dbReference type="InterPro" id="IPR042096">
    <property type="entry name" value="Dihydro-acid_dehy_C"/>
</dbReference>
<dbReference type="InterPro" id="IPR004404">
    <property type="entry name" value="DihydroxyA_deHydtase"/>
</dbReference>
<dbReference type="InterPro" id="IPR020558">
    <property type="entry name" value="DiOHA_6PGluconate_deHydtase_CS"/>
</dbReference>
<dbReference type="InterPro" id="IPR056740">
    <property type="entry name" value="ILV_EDD_C"/>
</dbReference>
<dbReference type="InterPro" id="IPR000581">
    <property type="entry name" value="ILV_EDD_N"/>
</dbReference>
<dbReference type="InterPro" id="IPR037237">
    <property type="entry name" value="IlvD/EDD_N"/>
</dbReference>
<dbReference type="NCBIfam" id="TIGR00110">
    <property type="entry name" value="ilvD"/>
    <property type="match status" value="1"/>
</dbReference>
<dbReference type="NCBIfam" id="NF002068">
    <property type="entry name" value="PRK00911.1"/>
    <property type="match status" value="1"/>
</dbReference>
<dbReference type="PANTHER" id="PTHR43661">
    <property type="entry name" value="D-XYLONATE DEHYDRATASE"/>
    <property type="match status" value="1"/>
</dbReference>
<dbReference type="PANTHER" id="PTHR43661:SF3">
    <property type="entry name" value="D-XYLONATE DEHYDRATASE YAGF-RELATED"/>
    <property type="match status" value="1"/>
</dbReference>
<dbReference type="Pfam" id="PF24877">
    <property type="entry name" value="ILV_EDD_C"/>
    <property type="match status" value="1"/>
</dbReference>
<dbReference type="Pfam" id="PF00920">
    <property type="entry name" value="ILVD_EDD_N"/>
    <property type="match status" value="1"/>
</dbReference>
<dbReference type="SUPFAM" id="SSF143975">
    <property type="entry name" value="IlvD/EDD N-terminal domain-like"/>
    <property type="match status" value="1"/>
</dbReference>
<dbReference type="SUPFAM" id="SSF52016">
    <property type="entry name" value="LeuD/IlvD-like"/>
    <property type="match status" value="1"/>
</dbReference>
<dbReference type="PROSITE" id="PS00886">
    <property type="entry name" value="ILVD_EDD_1"/>
    <property type="match status" value="1"/>
</dbReference>
<dbReference type="PROSITE" id="PS00887">
    <property type="entry name" value="ILVD_EDD_2"/>
    <property type="match status" value="1"/>
</dbReference>
<keyword id="KW-0001">2Fe-2S</keyword>
<keyword id="KW-0028">Amino-acid biosynthesis</keyword>
<keyword id="KW-0100">Branched-chain amino acid biosynthesis</keyword>
<keyword id="KW-0408">Iron</keyword>
<keyword id="KW-0411">Iron-sulfur</keyword>
<keyword id="KW-0456">Lyase</keyword>
<keyword id="KW-0460">Magnesium</keyword>
<keyword id="KW-0479">Metal-binding</keyword>
<organism>
    <name type="scientific">Methanococcus aeolicus (strain ATCC BAA-1280 / DSM 17508 / OCM 812 / Nankai-3)</name>
    <dbReference type="NCBI Taxonomy" id="419665"/>
    <lineage>
        <taxon>Archaea</taxon>
        <taxon>Methanobacteriati</taxon>
        <taxon>Methanobacteriota</taxon>
        <taxon>Methanomada group</taxon>
        <taxon>Methanococci</taxon>
        <taxon>Methanococcales</taxon>
        <taxon>Methanococcaceae</taxon>
        <taxon>Methanococcus</taxon>
    </lineage>
</organism>
<feature type="chain" id="PRO_1000001003" description="Dihydroxy-acid dehydratase">
    <location>
        <begin position="1"/>
        <end position="550"/>
    </location>
</feature>
<feature type="active site" description="Proton acceptor" evidence="1">
    <location>
        <position position="466"/>
    </location>
</feature>
<feature type="binding site" evidence="1">
    <location>
        <position position="78"/>
    </location>
    <ligand>
        <name>Mg(2+)</name>
        <dbReference type="ChEBI" id="CHEBI:18420"/>
    </ligand>
</feature>
<feature type="binding site" evidence="1">
    <location>
        <position position="119"/>
    </location>
    <ligand>
        <name>[2Fe-2S] cluster</name>
        <dbReference type="ChEBI" id="CHEBI:190135"/>
    </ligand>
</feature>
<feature type="binding site" evidence="1">
    <location>
        <position position="120"/>
    </location>
    <ligand>
        <name>Mg(2+)</name>
        <dbReference type="ChEBI" id="CHEBI:18420"/>
    </ligand>
</feature>
<feature type="binding site" description="via carbamate group" evidence="1">
    <location>
        <position position="121"/>
    </location>
    <ligand>
        <name>Mg(2+)</name>
        <dbReference type="ChEBI" id="CHEBI:18420"/>
    </ligand>
</feature>
<feature type="binding site" evidence="1">
    <location>
        <position position="191"/>
    </location>
    <ligand>
        <name>[2Fe-2S] cluster</name>
        <dbReference type="ChEBI" id="CHEBI:190135"/>
    </ligand>
</feature>
<feature type="binding site" evidence="1">
    <location>
        <position position="440"/>
    </location>
    <ligand>
        <name>Mg(2+)</name>
        <dbReference type="ChEBI" id="CHEBI:18420"/>
    </ligand>
</feature>
<feature type="modified residue" description="N6-carboxylysine" evidence="1">
    <location>
        <position position="121"/>
    </location>
</feature>
<protein>
    <recommendedName>
        <fullName evidence="1">Dihydroxy-acid dehydratase</fullName>
        <shortName evidence="1">DAD</shortName>
        <ecNumber evidence="1">4.2.1.9</ecNumber>
    </recommendedName>
</protein>
<name>ILVD_META3</name>